<name>GGPPS_GEOAI</name>
<accession>A0A0A7GEY4</accession>
<evidence type="ECO:0000250" key="1">
    <source>
        <dbReference type="UniProtKB" id="Q12051"/>
    </source>
</evidence>
<evidence type="ECO:0000269" key="2">
    <source>
    </source>
</evidence>
<evidence type="ECO:0000303" key="3">
    <source>
    </source>
</evidence>
<evidence type="ECO:0000305" key="4"/>
<evidence type="ECO:0000312" key="5">
    <source>
        <dbReference type="EMBL" id="AIY90378.1"/>
    </source>
</evidence>
<evidence type="ECO:0007744" key="6">
    <source>
        <dbReference type="PDB" id="5JFQ"/>
    </source>
</evidence>
<evidence type="ECO:0007829" key="7">
    <source>
        <dbReference type="PDB" id="5JFQ"/>
    </source>
</evidence>
<gene>
    <name evidence="5" type="ORF">GACE_1337</name>
</gene>
<protein>
    <recommendedName>
        <fullName evidence="3">Geranylgeranyl pyrophosphate synthase</fullName>
        <shortName evidence="3">GGPP synthase</shortName>
        <shortName evidence="4">GGPPSase</shortName>
        <ecNumber evidence="2">2.5.1.-</ecNumber>
    </recommendedName>
    <alternativeName>
        <fullName evidence="4">Dimethylallyltranstransferase</fullName>
        <ecNumber evidence="2">2.5.1.1</ecNumber>
    </alternativeName>
    <alternativeName>
        <fullName evidence="4">Farnesyl diphosphate synthase</fullName>
    </alternativeName>
    <alternativeName>
        <fullName evidence="4">Farnesyltranstransferase</fullName>
        <ecNumber evidence="2">2.5.1.29</ecNumber>
    </alternativeName>
    <alternativeName>
        <fullName evidence="4">Geranylgeranyl diphosphate synthase</fullName>
    </alternativeName>
    <alternativeName>
        <fullName evidence="4">Geranyltranstransferase</fullName>
        <ecNumber evidence="2">2.5.1.10</ecNumber>
    </alternativeName>
</protein>
<comment type="function">
    <text evidence="2">Catalyzes the addition of 3 molecules of isopentenyl diphosphate (IPP) onto dimethylallyl diphosphate (DMAPP) to form geranylgeranyl pyrophosphate (GGPP). Catalyzes the synthesis of geranylgeranyl pyrophosphate as a major product and of farnesyl pyrophosphate in smaller amounts.</text>
</comment>
<comment type="catalytic activity">
    <reaction evidence="2">
        <text>isopentenyl diphosphate + dimethylallyl diphosphate = (2E)-geranyl diphosphate + diphosphate</text>
        <dbReference type="Rhea" id="RHEA:22408"/>
        <dbReference type="ChEBI" id="CHEBI:33019"/>
        <dbReference type="ChEBI" id="CHEBI:57623"/>
        <dbReference type="ChEBI" id="CHEBI:58057"/>
        <dbReference type="ChEBI" id="CHEBI:128769"/>
        <dbReference type="EC" id="2.5.1.1"/>
    </reaction>
</comment>
<comment type="catalytic activity">
    <reaction evidence="2">
        <text>isopentenyl diphosphate + (2E)-geranyl diphosphate = (2E,6E)-farnesyl diphosphate + diphosphate</text>
        <dbReference type="Rhea" id="RHEA:19361"/>
        <dbReference type="ChEBI" id="CHEBI:33019"/>
        <dbReference type="ChEBI" id="CHEBI:58057"/>
        <dbReference type="ChEBI" id="CHEBI:128769"/>
        <dbReference type="ChEBI" id="CHEBI:175763"/>
        <dbReference type="EC" id="2.5.1.10"/>
    </reaction>
</comment>
<comment type="catalytic activity">
    <reaction evidence="2">
        <text>isopentenyl diphosphate + (2E,6E)-farnesyl diphosphate = (2E,6E,10E)-geranylgeranyl diphosphate + diphosphate</text>
        <dbReference type="Rhea" id="RHEA:17653"/>
        <dbReference type="ChEBI" id="CHEBI:33019"/>
        <dbReference type="ChEBI" id="CHEBI:58756"/>
        <dbReference type="ChEBI" id="CHEBI:128769"/>
        <dbReference type="ChEBI" id="CHEBI:175763"/>
        <dbReference type="EC" id="2.5.1.29"/>
    </reaction>
</comment>
<comment type="cofactor">
    <cofactor evidence="1">
        <name>Mg(2+)</name>
        <dbReference type="ChEBI" id="CHEBI:18420"/>
    </cofactor>
    <text evidence="1">Binds 2 Mg(2+) ions per subunit.</text>
</comment>
<comment type="pathway">
    <text evidence="4">Isoprenoid biosynthesis; geranyl diphosphate biosynthesis; geranyl diphosphate from dimethylallyl diphosphate and isopentenyl diphosphate: step 1/1.</text>
</comment>
<comment type="pathway">
    <text evidence="4">Isoprenoid biosynthesis; farnesyl diphosphate biosynthesis; farnesyl diphosphate from geranyl diphosphate and isopentenyl diphosphate: step 1/1.</text>
</comment>
<comment type="pathway">
    <text evidence="4">Isoprenoid biosynthesis; geranylgeranyl diphosphate biosynthesis; geranylgeranyl diphosphate from farnesyl diphosphate and isopentenyl diphosphate: step 1/1.</text>
</comment>
<comment type="subunit">
    <text evidence="2">Homodimer.</text>
</comment>
<comment type="similarity">
    <text evidence="4">Belongs to the FPP/GGPP synthase family.</text>
</comment>
<proteinExistence type="evidence at protein level"/>
<keyword id="KW-0002">3D-structure</keyword>
<keyword id="KW-0414">Isoprene biosynthesis</keyword>
<keyword id="KW-0460">Magnesium</keyword>
<keyword id="KW-0479">Metal-binding</keyword>
<keyword id="KW-0808">Transferase</keyword>
<dbReference type="EC" id="2.5.1.-" evidence="2"/>
<dbReference type="EC" id="2.5.1.1" evidence="2"/>
<dbReference type="EC" id="2.5.1.29" evidence="2"/>
<dbReference type="EC" id="2.5.1.10" evidence="2"/>
<dbReference type="EMBL" id="CP009552">
    <property type="protein sequence ID" value="AIY90378.1"/>
    <property type="molecule type" value="Genomic_DNA"/>
</dbReference>
<dbReference type="RefSeq" id="WP_048092150.1">
    <property type="nucleotide sequence ID" value="NZ_CP009552.1"/>
</dbReference>
<dbReference type="PDB" id="5JFQ">
    <property type="method" value="X-ray"/>
    <property type="resolution" value="2.51 A"/>
    <property type="chains" value="A/B=1-319"/>
</dbReference>
<dbReference type="PDBsum" id="5JFQ"/>
<dbReference type="SMR" id="A0A0A7GEY4"/>
<dbReference type="STRING" id="565033.GACE_1337"/>
<dbReference type="GeneID" id="24797917"/>
<dbReference type="KEGG" id="gac:GACE_1337"/>
<dbReference type="eggNOG" id="arCOG01726">
    <property type="taxonomic scope" value="Archaea"/>
</dbReference>
<dbReference type="HOGENOM" id="CLU_014015_2_1_2"/>
<dbReference type="BRENDA" id="2.5.1.29">
    <property type="organism ID" value="17637"/>
</dbReference>
<dbReference type="UniPathway" id="UPA00259">
    <property type="reaction ID" value="UER00368"/>
</dbReference>
<dbReference type="UniPathway" id="UPA00260">
    <property type="reaction ID" value="UER00369"/>
</dbReference>
<dbReference type="UniPathway" id="UPA00389">
    <property type="reaction ID" value="UER00564"/>
</dbReference>
<dbReference type="Proteomes" id="UP000030624">
    <property type="component" value="Chromosome"/>
</dbReference>
<dbReference type="GO" id="GO:0004337">
    <property type="term" value="F:(2E,6E)-farnesyl diphosphate synthase activity"/>
    <property type="evidence" value="ECO:0007669"/>
    <property type="project" value="UniProtKB-EC"/>
</dbReference>
<dbReference type="GO" id="GO:0004161">
    <property type="term" value="F:dimethylallyltranstransferase activity"/>
    <property type="evidence" value="ECO:0007669"/>
    <property type="project" value="UniProtKB-EC"/>
</dbReference>
<dbReference type="GO" id="GO:0004311">
    <property type="term" value="F:geranylgeranyl diphosphate synthase activity"/>
    <property type="evidence" value="ECO:0007669"/>
    <property type="project" value="UniProtKB-EC"/>
</dbReference>
<dbReference type="GO" id="GO:0046872">
    <property type="term" value="F:metal ion binding"/>
    <property type="evidence" value="ECO:0007669"/>
    <property type="project" value="UniProtKB-KW"/>
</dbReference>
<dbReference type="GO" id="GO:0045337">
    <property type="term" value="P:farnesyl diphosphate biosynthetic process"/>
    <property type="evidence" value="ECO:0007669"/>
    <property type="project" value="UniProtKB-UniPathway"/>
</dbReference>
<dbReference type="GO" id="GO:0033384">
    <property type="term" value="P:geranyl diphosphate biosynthetic process"/>
    <property type="evidence" value="ECO:0007669"/>
    <property type="project" value="UniProtKB-UniPathway"/>
</dbReference>
<dbReference type="GO" id="GO:0033386">
    <property type="term" value="P:geranylgeranyl diphosphate biosynthetic process"/>
    <property type="evidence" value="ECO:0007669"/>
    <property type="project" value="UniProtKB-UniPathway"/>
</dbReference>
<dbReference type="CDD" id="cd00685">
    <property type="entry name" value="Trans_IPPS_HT"/>
    <property type="match status" value="1"/>
</dbReference>
<dbReference type="Gene3D" id="1.10.600.10">
    <property type="entry name" value="Farnesyl Diphosphate Synthase"/>
    <property type="match status" value="1"/>
</dbReference>
<dbReference type="InterPro" id="IPR008949">
    <property type="entry name" value="Isoprenoid_synthase_dom_sf"/>
</dbReference>
<dbReference type="InterPro" id="IPR000092">
    <property type="entry name" value="Polyprenyl_synt"/>
</dbReference>
<dbReference type="InterPro" id="IPR033749">
    <property type="entry name" value="Polyprenyl_synt_CS"/>
</dbReference>
<dbReference type="PANTHER" id="PTHR12001">
    <property type="entry name" value="GERANYLGERANYL PYROPHOSPHATE SYNTHASE"/>
    <property type="match status" value="1"/>
</dbReference>
<dbReference type="PANTHER" id="PTHR12001:SF85">
    <property type="entry name" value="SHORT CHAIN ISOPRENYL DIPHOSPHATE SYNTHASE"/>
    <property type="match status" value="1"/>
</dbReference>
<dbReference type="Pfam" id="PF00348">
    <property type="entry name" value="polyprenyl_synt"/>
    <property type="match status" value="1"/>
</dbReference>
<dbReference type="SFLD" id="SFLDS00005">
    <property type="entry name" value="Isoprenoid_Synthase_Type_I"/>
    <property type="match status" value="1"/>
</dbReference>
<dbReference type="SFLD" id="SFLDG01017">
    <property type="entry name" value="Polyprenyl_Transferase_Like"/>
    <property type="match status" value="1"/>
</dbReference>
<dbReference type="SUPFAM" id="SSF48576">
    <property type="entry name" value="Terpenoid synthases"/>
    <property type="match status" value="1"/>
</dbReference>
<dbReference type="PROSITE" id="PS00723">
    <property type="entry name" value="POLYPRENYL_SYNTHASE_1"/>
    <property type="match status" value="1"/>
</dbReference>
<sequence>MISEIIKDRAKLVNEKIEELLKEQEPEGLYRAARHYLKAGGKRLRPVITLLSAEALGEDYRKAIHAAIAIETVHNFTLVHDDIMDEDEMRRGVKTVHTLFGIPTAILAGDTLYAEAFEILSMSDAPPENIVRAVSKLARVCVEICEGQFMDMSFEERDSVGESEYLEMVRKKTGVLIGISASIPAVLFGKDESVEKALWNYGIYSGIGFQIHDDLLDISGKGKIGKDWGSDILEGKKTLIVIKAFEEGIELETFGKGRASEEELERDIKKLFDCGAVDYARERAREYIEMAKKNLEVIDESPSRNYLVELADYLIERDH</sequence>
<organism>
    <name type="scientific">Geoglobus acetivorans</name>
    <dbReference type="NCBI Taxonomy" id="565033"/>
    <lineage>
        <taxon>Archaea</taxon>
        <taxon>Methanobacteriati</taxon>
        <taxon>Methanobacteriota</taxon>
        <taxon>Archaeoglobi</taxon>
        <taxon>Archaeoglobales</taxon>
        <taxon>Archaeoglobaceae</taxon>
        <taxon>Geoglobus</taxon>
    </lineage>
</organism>
<reference key="1">
    <citation type="journal article" date="2015" name="Appl. Environ. Microbiol.">
        <title>The Geoglobus acetivorans genome: Fe(III) reduction, acetate utilization, autotrophic growth, and degradation of aromatic compounds in a hyperthermophilic archaeon.</title>
        <authorList>
            <person name="Mardanov A.V."/>
            <person name="Slododkina G.B."/>
            <person name="Slobodkin A.I."/>
            <person name="Beletsky A.V."/>
            <person name="Gavrilov S.N."/>
            <person name="Kublanov I.V."/>
            <person name="Bonch-Osmolovskaya E.A."/>
            <person name="Skryabin K.G."/>
            <person name="Ravin N.V."/>
        </authorList>
    </citation>
    <scope>NUCLEOTIDE SEQUENCE [LARGE SCALE GENOMIC DNA]</scope>
    <source>
        <strain>DSM 21716 / VKM B-2522 / SBH6</strain>
    </source>
</reference>
<reference evidence="6" key="2">
    <citation type="journal article" date="2018" name="Extremophiles">
        <title>Structural characterization of geranylgeranyl pyrophosphate synthase GACE1337 from the hyperthermophilic archaeon Geoglobus acetivorans.</title>
        <authorList>
            <person name="Petrova T.E."/>
            <person name="Boyko K.M."/>
            <person name="Nikolaeva A.Y."/>
            <person name="Stekhanova T.N."/>
            <person name="Gruzdev E.V."/>
            <person name="Mardanov A.V."/>
            <person name="Stroilov V.S."/>
            <person name="Littlechild J.A."/>
            <person name="Popov V.O."/>
            <person name="Bezsudnova E.Y."/>
        </authorList>
    </citation>
    <scope>X-RAY CRYSTALLOGRAPHY (2.51 ANGSTROMS)</scope>
    <scope>FUNCTION</scope>
    <scope>CATALYTIC ACTIVITY</scope>
    <scope>SUBUNIT</scope>
</reference>
<feature type="chain" id="PRO_0000448754" description="Geranylgeranyl pyrophosphate synthase">
    <location>
        <begin position="1"/>
        <end position="319"/>
    </location>
</feature>
<feature type="binding site" evidence="1">
    <location>
        <position position="42"/>
    </location>
    <ligand>
        <name>isopentenyl diphosphate</name>
        <dbReference type="ChEBI" id="CHEBI:128769"/>
    </ligand>
</feature>
<feature type="binding site" evidence="1">
    <location>
        <position position="45"/>
    </location>
    <ligand>
        <name>isopentenyl diphosphate</name>
        <dbReference type="ChEBI" id="CHEBI:128769"/>
    </ligand>
</feature>
<feature type="binding site" evidence="1">
    <location>
        <position position="74"/>
    </location>
    <ligand>
        <name>isopentenyl diphosphate</name>
        <dbReference type="ChEBI" id="CHEBI:128769"/>
    </ligand>
</feature>
<feature type="binding site" evidence="1">
    <location>
        <position position="81"/>
    </location>
    <ligand>
        <name>Mg(2+)</name>
        <dbReference type="ChEBI" id="CHEBI:18420"/>
        <label>1</label>
    </ligand>
</feature>
<feature type="binding site" evidence="1">
    <location>
        <position position="81"/>
    </location>
    <ligand>
        <name>Mg(2+)</name>
        <dbReference type="ChEBI" id="CHEBI:18420"/>
        <label>2</label>
    </ligand>
</feature>
<feature type="binding site" evidence="1">
    <location>
        <position position="85"/>
    </location>
    <ligand>
        <name>Mg(2+)</name>
        <dbReference type="ChEBI" id="CHEBI:18420"/>
        <label>1</label>
    </ligand>
</feature>
<feature type="binding site" evidence="1">
    <location>
        <position position="85"/>
    </location>
    <ligand>
        <name>Mg(2+)</name>
        <dbReference type="ChEBI" id="CHEBI:18420"/>
        <label>2</label>
    </ligand>
</feature>
<feature type="binding site" evidence="1">
    <location>
        <position position="90"/>
    </location>
    <ligand>
        <name>dimethylallyl diphosphate</name>
        <dbReference type="ChEBI" id="CHEBI:57623"/>
    </ligand>
</feature>
<feature type="binding site" evidence="1">
    <location>
        <position position="91"/>
    </location>
    <ligand>
        <name>isopentenyl diphosphate</name>
        <dbReference type="ChEBI" id="CHEBI:128769"/>
    </ligand>
</feature>
<feature type="binding site" evidence="1">
    <location>
        <position position="172"/>
    </location>
    <ligand>
        <name>dimethylallyl diphosphate</name>
        <dbReference type="ChEBI" id="CHEBI:57623"/>
    </ligand>
</feature>
<feature type="binding site" evidence="1">
    <location>
        <position position="173"/>
    </location>
    <ligand>
        <name>dimethylallyl diphosphate</name>
        <dbReference type="ChEBI" id="CHEBI:57623"/>
    </ligand>
</feature>
<feature type="binding site" evidence="1">
    <location>
        <position position="210"/>
    </location>
    <ligand>
        <name>dimethylallyl diphosphate</name>
        <dbReference type="ChEBI" id="CHEBI:57623"/>
    </ligand>
</feature>
<feature type="binding site" evidence="1">
    <location>
        <position position="226"/>
    </location>
    <ligand>
        <name>dimethylallyl diphosphate</name>
        <dbReference type="ChEBI" id="CHEBI:57623"/>
    </ligand>
</feature>
<feature type="binding site" evidence="1">
    <location>
        <position position="236"/>
    </location>
    <ligand>
        <name>dimethylallyl diphosphate</name>
        <dbReference type="ChEBI" id="CHEBI:57623"/>
    </ligand>
</feature>
<feature type="helix" evidence="7">
    <location>
        <begin position="2"/>
        <end position="20"/>
    </location>
</feature>
<feature type="helix" evidence="7">
    <location>
        <begin position="27"/>
        <end position="38"/>
    </location>
</feature>
<feature type="helix" evidence="7">
    <location>
        <begin position="44"/>
        <end position="55"/>
    </location>
</feature>
<feature type="helix" evidence="7">
    <location>
        <begin position="60"/>
        <end position="63"/>
    </location>
</feature>
<feature type="helix" evidence="7">
    <location>
        <begin position="64"/>
        <end position="85"/>
    </location>
</feature>
<feature type="strand" evidence="7">
    <location>
        <begin position="88"/>
        <end position="90"/>
    </location>
</feature>
<feature type="helix" evidence="7">
    <location>
        <begin position="96"/>
        <end position="100"/>
    </location>
</feature>
<feature type="helix" evidence="7">
    <location>
        <begin position="102"/>
        <end position="120"/>
    </location>
</feature>
<feature type="helix" evidence="7">
    <location>
        <begin position="127"/>
        <end position="156"/>
    </location>
</feature>
<feature type="helix" evidence="7">
    <location>
        <begin position="162"/>
        <end position="172"/>
    </location>
</feature>
<feature type="helix" evidence="7">
    <location>
        <begin position="174"/>
        <end position="187"/>
    </location>
</feature>
<feature type="helix" evidence="7">
    <location>
        <begin position="192"/>
        <end position="216"/>
    </location>
</feature>
<feature type="helix" evidence="7">
    <location>
        <begin position="230"/>
        <end position="233"/>
    </location>
</feature>
<feature type="helix" evidence="7">
    <location>
        <begin position="239"/>
        <end position="246"/>
    </location>
</feature>
<feature type="helix" evidence="7">
    <location>
        <begin position="265"/>
        <end position="273"/>
    </location>
</feature>
<feature type="helix" evidence="7">
    <location>
        <begin position="276"/>
        <end position="295"/>
    </location>
</feature>
<feature type="helix" evidence="7">
    <location>
        <begin position="302"/>
        <end position="316"/>
    </location>
</feature>